<evidence type="ECO:0000269" key="1">
    <source>
    </source>
</evidence>
<evidence type="ECO:0000269" key="2">
    <source>
    </source>
</evidence>
<evidence type="ECO:0000303" key="3">
    <source>
    </source>
</evidence>
<evidence type="ECO:0000312" key="4">
    <source>
        <dbReference type="EMBL" id="CAK10677.1"/>
    </source>
</evidence>
<keyword id="KW-0106">Calcium</keyword>
<keyword id="KW-0479">Metal-binding</keyword>
<keyword id="KW-0614">Plasmid</keyword>
<keyword id="KW-0964">Secreted</keyword>
<gene>
    <name evidence="3" type="primary">rapA2</name>
    <name evidence="4" type="ordered locus">pRL100451</name>
</gene>
<reference key="1">
    <citation type="journal article" date="2006" name="Genome Biol.">
        <title>The genome of Rhizobium leguminosarum has recognizable core and accessory components.</title>
        <authorList>
            <person name="Young J.P.W."/>
            <person name="Crossman L.C."/>
            <person name="Johnston A.W.B."/>
            <person name="Thomson N.R."/>
            <person name="Ghazoui Z.F."/>
            <person name="Hull K.H."/>
            <person name="Wexler M."/>
            <person name="Curson A.R.J."/>
            <person name="Todd J.D."/>
            <person name="Poole P.S."/>
            <person name="Mauchline T.H."/>
            <person name="East A.K."/>
            <person name="Quail M.A."/>
            <person name="Churcher C."/>
            <person name="Arrowsmith C."/>
            <person name="Cherevach I."/>
            <person name="Chillingworth T."/>
            <person name="Clarke K."/>
            <person name="Cronin A."/>
            <person name="Davis P."/>
            <person name="Fraser A."/>
            <person name="Hance Z."/>
            <person name="Hauser H."/>
            <person name="Jagels K."/>
            <person name="Moule S."/>
            <person name="Mungall K."/>
            <person name="Norbertczak H."/>
            <person name="Rabbinowitsch E."/>
            <person name="Sanders M."/>
            <person name="Simmonds M."/>
            <person name="Whitehead S."/>
            <person name="Parkhill J."/>
        </authorList>
    </citation>
    <scope>NUCLEOTIDE SEQUENCE [LARGE SCALE GENOMIC DNA]</scope>
    <source>
        <strain>DSM 114642 / LMG 32736 / 3841</strain>
    </source>
</reference>
<reference key="2">
    <citation type="journal article" date="2008" name="BMC Genomics">
        <title>Identification of protein secretion systems and novel secreted proteins in Rhizobium leguminosarum bv. viciae.</title>
        <authorList>
            <person name="Krehenbrink M."/>
            <person name="Downie J.A."/>
        </authorList>
    </citation>
    <scope>IDENTIFICATION BY MASS SPECTROMETRY</scope>
    <scope>SUBCELLULAR LOCATION</scope>
    <source>
        <strain>DSM 114642 / LMG 32736 / 3841</strain>
    </source>
</reference>
<reference key="3">
    <citation type="journal article" date="2013" name="J. Biol. Chem.">
        <title>RapA2 is a calcium-binding lectin composed of two highly conserved cadherin-like domains that specifically recognize Rhizobium leguminosarum acidic exopolysaccharides.</title>
        <authorList>
            <person name="Abdian P.L."/>
            <person name="Caramelo J.J."/>
            <person name="Ausmees N."/>
            <person name="Zorreguieta A."/>
        </authorList>
    </citation>
    <scope>FUNCTION</scope>
    <scope>DOMAIN</scope>
    <source>
        <strain>DSM 114642 / LMG 32736 / 3841</strain>
    </source>
</reference>
<name>RAPA2_RHIJ3</name>
<proteinExistence type="evidence at protein level"/>
<comment type="function">
    <text evidence="2">Interacts specifically in a calcium-dependent manner with the acidic exopolysaccharide (EPS) and capsular polysaccharide produced by R.leguminosarum. Could be involved in the development of the biofilm matrix made of EPS.</text>
</comment>
<comment type="subcellular location">
    <subcellularLocation>
        <location evidence="1">Secreted</location>
    </subcellularLocation>
    <text evidence="1">Secreted by the type I secretion system PrsDE.</text>
</comment>
<comment type="domain">
    <text evidence="2">Contains two Ra/cadherin-like domains composed mostly of beta-sheets joined by a linker region. Proper folding and stability are dependent on the binding of one calcium ion per protein molecule.</text>
</comment>
<sequence>MASPIHATDDSATFQETDVISGNLLSNDSSDNGHLFLRAFDGASVGAKSGNSQVTEIQGDYGTFFVKPDGSYTYVLSDAAKIGFANGESFQEKVSYKISDGSGHTDVGLFTLNIQGVTQVKPIAVDDHYSFNEGDAIGGNVLDNDIAGDNGHLFLRQFDGTNVSAKSGPDAVTDIVGDYGVFHVKPNGEFTYELTDDLAAGQTVTETVQYYKISDGEGHTDAGVLTLNITGTDALV</sequence>
<accession>Q1M755</accession>
<protein>
    <recommendedName>
        <fullName evidence="3">Calcium-binding lectin RapA2</fullName>
    </recommendedName>
</protein>
<organism>
    <name type="scientific">Rhizobium johnstonii (strain DSM 114642 / LMG 32736 / 3841)</name>
    <name type="common">Rhizobium leguminosarum bv. viciae</name>
    <dbReference type="NCBI Taxonomy" id="216596"/>
    <lineage>
        <taxon>Bacteria</taxon>
        <taxon>Pseudomonadati</taxon>
        <taxon>Pseudomonadota</taxon>
        <taxon>Alphaproteobacteria</taxon>
        <taxon>Hyphomicrobiales</taxon>
        <taxon>Rhizobiaceae</taxon>
        <taxon>Rhizobium/Agrobacterium group</taxon>
        <taxon>Rhizobium</taxon>
        <taxon>Rhizobium johnstonii</taxon>
    </lineage>
</organism>
<geneLocation type="plasmid" evidence="4">
    <name>pRL10</name>
</geneLocation>
<dbReference type="EMBL" id="AM236084">
    <property type="protein sequence ID" value="CAK10677.1"/>
    <property type="molecule type" value="Genomic_DNA"/>
</dbReference>
<dbReference type="RefSeq" id="WP_011654474.1">
    <property type="nucleotide sequence ID" value="NC_008381.1"/>
</dbReference>
<dbReference type="EnsemblBacteria" id="CAK10677">
    <property type="protein sequence ID" value="CAK10677"/>
    <property type="gene ID" value="pRL100451"/>
</dbReference>
<dbReference type="KEGG" id="rle:pRL100451"/>
<dbReference type="HOGENOM" id="CLU_1194109_0_0_5"/>
<dbReference type="Proteomes" id="UP000006575">
    <property type="component" value="Plasmid pRL10"/>
</dbReference>
<dbReference type="GO" id="GO:0005576">
    <property type="term" value="C:extracellular region"/>
    <property type="evidence" value="ECO:0007669"/>
    <property type="project" value="UniProtKB-SubCell"/>
</dbReference>
<dbReference type="GO" id="GO:0046872">
    <property type="term" value="F:metal ion binding"/>
    <property type="evidence" value="ECO:0007669"/>
    <property type="project" value="UniProtKB-KW"/>
</dbReference>
<dbReference type="InterPro" id="IPR040853">
    <property type="entry name" value="RapA2_cadherin-like"/>
</dbReference>
<dbReference type="InterPro" id="IPR010221">
    <property type="entry name" value="VCBS_dom"/>
</dbReference>
<dbReference type="NCBIfam" id="TIGR01965">
    <property type="entry name" value="VCBS_repeat"/>
    <property type="match status" value="2"/>
</dbReference>
<dbReference type="Pfam" id="PF17803">
    <property type="entry name" value="Cadherin_4"/>
    <property type="match status" value="2"/>
</dbReference>
<feature type="chain" id="PRO_0000435394" description="Calcium-binding lectin RapA2">
    <location>
        <begin position="1"/>
        <end position="236"/>
    </location>
</feature>